<comment type="function">
    <text evidence="1">Catalyzes the condensation of pantoate with beta-alanine in an ATP-dependent reaction via a pantoyl-adenylate intermediate.</text>
</comment>
<comment type="catalytic activity">
    <reaction evidence="1">
        <text>(R)-pantoate + beta-alanine + ATP = (R)-pantothenate + AMP + diphosphate + H(+)</text>
        <dbReference type="Rhea" id="RHEA:10912"/>
        <dbReference type="ChEBI" id="CHEBI:15378"/>
        <dbReference type="ChEBI" id="CHEBI:15980"/>
        <dbReference type="ChEBI" id="CHEBI:29032"/>
        <dbReference type="ChEBI" id="CHEBI:30616"/>
        <dbReference type="ChEBI" id="CHEBI:33019"/>
        <dbReference type="ChEBI" id="CHEBI:57966"/>
        <dbReference type="ChEBI" id="CHEBI:456215"/>
        <dbReference type="EC" id="6.3.2.1"/>
    </reaction>
</comment>
<comment type="pathway">
    <text evidence="1">Cofactor biosynthesis; (R)-pantothenate biosynthesis; (R)-pantothenate from (R)-pantoate and beta-alanine: step 1/1.</text>
</comment>
<comment type="subunit">
    <text evidence="1">Homodimer.</text>
</comment>
<comment type="subcellular location">
    <subcellularLocation>
        <location evidence="1">Cytoplasm</location>
    </subcellularLocation>
</comment>
<comment type="miscellaneous">
    <text evidence="1">The reaction proceeds by a bi uni uni bi ping pong mechanism.</text>
</comment>
<comment type="similarity">
    <text evidence="1">Belongs to the pantothenate synthetase family.</text>
</comment>
<gene>
    <name evidence="1" type="primary">panC</name>
    <name type="ordered locus">Bcer98_1263</name>
</gene>
<accession>A7GN77</accession>
<proteinExistence type="inferred from homology"/>
<protein>
    <recommendedName>
        <fullName evidence="1">Pantothenate synthetase</fullName>
        <shortName evidence="1">PS</shortName>
        <ecNumber evidence="1">6.3.2.1</ecNumber>
    </recommendedName>
    <alternativeName>
        <fullName evidence="1">Pantoate--beta-alanine ligase</fullName>
    </alternativeName>
    <alternativeName>
        <fullName evidence="1">Pantoate-activating enzyme</fullName>
    </alternativeName>
</protein>
<name>PANC_BACCN</name>
<keyword id="KW-0067">ATP-binding</keyword>
<keyword id="KW-0963">Cytoplasm</keyword>
<keyword id="KW-0436">Ligase</keyword>
<keyword id="KW-0547">Nucleotide-binding</keyword>
<keyword id="KW-0566">Pantothenate biosynthesis</keyword>
<reference key="1">
    <citation type="journal article" date="2008" name="Chem. Biol. Interact.">
        <title>Extending the Bacillus cereus group genomics to putative food-borne pathogens of different toxicity.</title>
        <authorList>
            <person name="Lapidus A."/>
            <person name="Goltsman E."/>
            <person name="Auger S."/>
            <person name="Galleron N."/>
            <person name="Segurens B."/>
            <person name="Dossat C."/>
            <person name="Land M.L."/>
            <person name="Broussolle V."/>
            <person name="Brillard J."/>
            <person name="Guinebretiere M.-H."/>
            <person name="Sanchis V."/>
            <person name="Nguen-the C."/>
            <person name="Lereclus D."/>
            <person name="Richardson P."/>
            <person name="Wincker P."/>
            <person name="Weissenbach J."/>
            <person name="Ehrlich S.D."/>
            <person name="Sorokin A."/>
        </authorList>
    </citation>
    <scope>NUCLEOTIDE SEQUENCE [LARGE SCALE GENOMIC DNA]</scope>
    <source>
        <strain>DSM 22905 / CIP 110041 / 391-98 / NVH 391-98</strain>
    </source>
</reference>
<sequence>MKVITTVKDMQQIAGELRASGKEIGFVPTMGYLHEGHATLLRQAKKENDIVILSVFVNPLQFGPDEDFDRYPRDIKRDERVAKEAGVDYLFYPSVDEMYPAEQTTKIEVVKRTNVLCGKRRPVHFAGVATVLMKLFHITMPTRAYFGMKDAQQVAVVEGIVSDFHIPVTIVPVEIVREADGLAKSSRNVYLSEQERKEAPHLYRSLCIAKQKIEEGERHPRNITTVVKEYIEANTNGIVDYVDIYAYPALTPLEIIKGRIILAIAVQFKNARLIDNITLTVQ</sequence>
<dbReference type="EC" id="6.3.2.1" evidence="1"/>
<dbReference type="EMBL" id="CP000764">
    <property type="protein sequence ID" value="ABS21585.1"/>
    <property type="molecule type" value="Genomic_DNA"/>
</dbReference>
<dbReference type="RefSeq" id="WP_012093752.1">
    <property type="nucleotide sequence ID" value="NC_009674.1"/>
</dbReference>
<dbReference type="SMR" id="A7GN77"/>
<dbReference type="STRING" id="315749.Bcer98_1263"/>
<dbReference type="GeneID" id="33896612"/>
<dbReference type="KEGG" id="bcy:Bcer98_1263"/>
<dbReference type="eggNOG" id="COG0414">
    <property type="taxonomic scope" value="Bacteria"/>
</dbReference>
<dbReference type="HOGENOM" id="CLU_047148_0_0_9"/>
<dbReference type="OrthoDB" id="9773087at2"/>
<dbReference type="UniPathway" id="UPA00028">
    <property type="reaction ID" value="UER00005"/>
</dbReference>
<dbReference type="Proteomes" id="UP000002300">
    <property type="component" value="Chromosome"/>
</dbReference>
<dbReference type="GO" id="GO:0005829">
    <property type="term" value="C:cytosol"/>
    <property type="evidence" value="ECO:0007669"/>
    <property type="project" value="TreeGrafter"/>
</dbReference>
<dbReference type="GO" id="GO:0005524">
    <property type="term" value="F:ATP binding"/>
    <property type="evidence" value="ECO:0007669"/>
    <property type="project" value="UniProtKB-KW"/>
</dbReference>
<dbReference type="GO" id="GO:0004592">
    <property type="term" value="F:pantoate-beta-alanine ligase activity"/>
    <property type="evidence" value="ECO:0007669"/>
    <property type="project" value="UniProtKB-UniRule"/>
</dbReference>
<dbReference type="GO" id="GO:0015940">
    <property type="term" value="P:pantothenate biosynthetic process"/>
    <property type="evidence" value="ECO:0007669"/>
    <property type="project" value="UniProtKB-UniRule"/>
</dbReference>
<dbReference type="CDD" id="cd00560">
    <property type="entry name" value="PanC"/>
    <property type="match status" value="1"/>
</dbReference>
<dbReference type="FunFam" id="3.30.1300.10:FF:000001">
    <property type="entry name" value="Pantothenate synthetase"/>
    <property type="match status" value="1"/>
</dbReference>
<dbReference type="FunFam" id="3.40.50.620:FF:000013">
    <property type="entry name" value="Pantothenate synthetase"/>
    <property type="match status" value="1"/>
</dbReference>
<dbReference type="Gene3D" id="3.40.50.620">
    <property type="entry name" value="HUPs"/>
    <property type="match status" value="1"/>
</dbReference>
<dbReference type="Gene3D" id="3.30.1300.10">
    <property type="entry name" value="Pantoate-beta-alanine ligase, C-terminal domain"/>
    <property type="match status" value="1"/>
</dbReference>
<dbReference type="HAMAP" id="MF_00158">
    <property type="entry name" value="PanC"/>
    <property type="match status" value="1"/>
</dbReference>
<dbReference type="InterPro" id="IPR004821">
    <property type="entry name" value="Cyt_trans-like"/>
</dbReference>
<dbReference type="InterPro" id="IPR003721">
    <property type="entry name" value="Pantoate_ligase"/>
</dbReference>
<dbReference type="InterPro" id="IPR042176">
    <property type="entry name" value="Pantoate_ligase_C"/>
</dbReference>
<dbReference type="InterPro" id="IPR014729">
    <property type="entry name" value="Rossmann-like_a/b/a_fold"/>
</dbReference>
<dbReference type="NCBIfam" id="TIGR00125">
    <property type="entry name" value="cyt_tran_rel"/>
    <property type="match status" value="1"/>
</dbReference>
<dbReference type="NCBIfam" id="TIGR00018">
    <property type="entry name" value="panC"/>
    <property type="match status" value="1"/>
</dbReference>
<dbReference type="PANTHER" id="PTHR21299">
    <property type="entry name" value="CYTIDYLATE KINASE/PANTOATE-BETA-ALANINE LIGASE"/>
    <property type="match status" value="1"/>
</dbReference>
<dbReference type="PANTHER" id="PTHR21299:SF1">
    <property type="entry name" value="PANTOATE--BETA-ALANINE LIGASE"/>
    <property type="match status" value="1"/>
</dbReference>
<dbReference type="Pfam" id="PF02569">
    <property type="entry name" value="Pantoate_ligase"/>
    <property type="match status" value="1"/>
</dbReference>
<dbReference type="SUPFAM" id="SSF52374">
    <property type="entry name" value="Nucleotidylyl transferase"/>
    <property type="match status" value="1"/>
</dbReference>
<evidence type="ECO:0000255" key="1">
    <source>
        <dbReference type="HAMAP-Rule" id="MF_00158"/>
    </source>
</evidence>
<organism>
    <name type="scientific">Bacillus cytotoxicus (strain DSM 22905 / CIP 110041 / 391-98 / NVH 391-98)</name>
    <dbReference type="NCBI Taxonomy" id="315749"/>
    <lineage>
        <taxon>Bacteria</taxon>
        <taxon>Bacillati</taxon>
        <taxon>Bacillota</taxon>
        <taxon>Bacilli</taxon>
        <taxon>Bacillales</taxon>
        <taxon>Bacillaceae</taxon>
        <taxon>Bacillus</taxon>
        <taxon>Bacillus cereus group</taxon>
    </lineage>
</organism>
<feature type="chain" id="PRO_1000076839" description="Pantothenate synthetase">
    <location>
        <begin position="1"/>
        <end position="282"/>
    </location>
</feature>
<feature type="active site" description="Proton donor" evidence="1">
    <location>
        <position position="37"/>
    </location>
</feature>
<feature type="binding site" evidence="1">
    <location>
        <begin position="30"/>
        <end position="37"/>
    </location>
    <ligand>
        <name>ATP</name>
        <dbReference type="ChEBI" id="CHEBI:30616"/>
    </ligand>
</feature>
<feature type="binding site" evidence="1">
    <location>
        <position position="61"/>
    </location>
    <ligand>
        <name>(R)-pantoate</name>
        <dbReference type="ChEBI" id="CHEBI:15980"/>
    </ligand>
</feature>
<feature type="binding site" evidence="1">
    <location>
        <position position="61"/>
    </location>
    <ligand>
        <name>beta-alanine</name>
        <dbReference type="ChEBI" id="CHEBI:57966"/>
    </ligand>
</feature>
<feature type="binding site" evidence="1">
    <location>
        <begin position="147"/>
        <end position="150"/>
    </location>
    <ligand>
        <name>ATP</name>
        <dbReference type="ChEBI" id="CHEBI:30616"/>
    </ligand>
</feature>
<feature type="binding site" evidence="1">
    <location>
        <position position="153"/>
    </location>
    <ligand>
        <name>(R)-pantoate</name>
        <dbReference type="ChEBI" id="CHEBI:15980"/>
    </ligand>
</feature>
<feature type="binding site" evidence="1">
    <location>
        <position position="176"/>
    </location>
    <ligand>
        <name>ATP</name>
        <dbReference type="ChEBI" id="CHEBI:30616"/>
    </ligand>
</feature>
<feature type="binding site" evidence="1">
    <location>
        <begin position="184"/>
        <end position="187"/>
    </location>
    <ligand>
        <name>ATP</name>
        <dbReference type="ChEBI" id="CHEBI:30616"/>
    </ligand>
</feature>